<gene>
    <name evidence="1" type="primary">truB</name>
    <name type="ordered locus">Pmen_3606</name>
</gene>
<sequence>MAQVKRIRRKVDGIILLDKPRGFTSNAALQKVRWLLNAEKAGHTGSLDPLATGVLPLCFGEATKFSQYLLDADKGYETVAQLGVTTTTGDAEGEVLERRPVTVGRPEIEALLPRFRGEIKQIPPMYSALKKDGQPLYKLARAGEVVEREARSVTIARLELLALEGEQARLSVDCSKGTYIRTLVEDLGQLLGCGAHVAELRRTKAGPFELARTVTLEELEAVHAEGGSEALDRFLQPVDSGLQDWPLLQFSEHSAFYWLQGQPVRAPEAPKFGMVRVQDHNGRFIGIGEVSDDGRIAPRRLIYTGA</sequence>
<dbReference type="EC" id="5.4.99.25" evidence="1"/>
<dbReference type="EMBL" id="CP000680">
    <property type="protein sequence ID" value="ABP86354.1"/>
    <property type="molecule type" value="Genomic_DNA"/>
</dbReference>
<dbReference type="SMR" id="A4XYD8"/>
<dbReference type="STRING" id="399739.Pmen_3606"/>
<dbReference type="KEGG" id="pmy:Pmen_3606"/>
<dbReference type="PATRIC" id="fig|399739.8.peg.3655"/>
<dbReference type="eggNOG" id="COG0130">
    <property type="taxonomic scope" value="Bacteria"/>
</dbReference>
<dbReference type="HOGENOM" id="CLU_032087_0_3_6"/>
<dbReference type="OrthoDB" id="9802309at2"/>
<dbReference type="GO" id="GO:0003723">
    <property type="term" value="F:RNA binding"/>
    <property type="evidence" value="ECO:0007669"/>
    <property type="project" value="InterPro"/>
</dbReference>
<dbReference type="GO" id="GO:0160148">
    <property type="term" value="F:tRNA pseudouridine(55) synthase activity"/>
    <property type="evidence" value="ECO:0007669"/>
    <property type="project" value="UniProtKB-EC"/>
</dbReference>
<dbReference type="GO" id="GO:1990481">
    <property type="term" value="P:mRNA pseudouridine synthesis"/>
    <property type="evidence" value="ECO:0007669"/>
    <property type="project" value="TreeGrafter"/>
</dbReference>
<dbReference type="GO" id="GO:0031119">
    <property type="term" value="P:tRNA pseudouridine synthesis"/>
    <property type="evidence" value="ECO:0007669"/>
    <property type="project" value="UniProtKB-UniRule"/>
</dbReference>
<dbReference type="CDD" id="cd02573">
    <property type="entry name" value="PseudoU_synth_EcTruB"/>
    <property type="match status" value="1"/>
</dbReference>
<dbReference type="CDD" id="cd21152">
    <property type="entry name" value="PUA_TruB_bacterial"/>
    <property type="match status" value="1"/>
</dbReference>
<dbReference type="FunFam" id="2.30.130.10:FF:000012">
    <property type="entry name" value="tRNA pseudouridine synthase B"/>
    <property type="match status" value="1"/>
</dbReference>
<dbReference type="FunFam" id="3.30.2350.10:FF:000011">
    <property type="entry name" value="tRNA pseudouridine synthase B"/>
    <property type="match status" value="1"/>
</dbReference>
<dbReference type="Gene3D" id="3.30.2350.10">
    <property type="entry name" value="Pseudouridine synthase"/>
    <property type="match status" value="1"/>
</dbReference>
<dbReference type="Gene3D" id="2.30.130.10">
    <property type="entry name" value="PUA domain"/>
    <property type="match status" value="1"/>
</dbReference>
<dbReference type="HAMAP" id="MF_01080">
    <property type="entry name" value="TruB_bact"/>
    <property type="match status" value="1"/>
</dbReference>
<dbReference type="InterPro" id="IPR020103">
    <property type="entry name" value="PsdUridine_synth_cat_dom_sf"/>
</dbReference>
<dbReference type="InterPro" id="IPR002501">
    <property type="entry name" value="PsdUridine_synth_N"/>
</dbReference>
<dbReference type="InterPro" id="IPR015947">
    <property type="entry name" value="PUA-like_sf"/>
</dbReference>
<dbReference type="InterPro" id="IPR036974">
    <property type="entry name" value="PUA_sf"/>
</dbReference>
<dbReference type="InterPro" id="IPR014780">
    <property type="entry name" value="tRNA_psdUridine_synth_TruB"/>
</dbReference>
<dbReference type="InterPro" id="IPR015240">
    <property type="entry name" value="tRNA_sdUridine_synth_fam1_C"/>
</dbReference>
<dbReference type="InterPro" id="IPR032819">
    <property type="entry name" value="TruB_C"/>
</dbReference>
<dbReference type="NCBIfam" id="TIGR00431">
    <property type="entry name" value="TruB"/>
    <property type="match status" value="1"/>
</dbReference>
<dbReference type="PANTHER" id="PTHR13767:SF2">
    <property type="entry name" value="PSEUDOURIDYLATE SYNTHASE TRUB1"/>
    <property type="match status" value="1"/>
</dbReference>
<dbReference type="PANTHER" id="PTHR13767">
    <property type="entry name" value="TRNA-PSEUDOURIDINE SYNTHASE"/>
    <property type="match status" value="1"/>
</dbReference>
<dbReference type="Pfam" id="PF09157">
    <property type="entry name" value="TruB-C_2"/>
    <property type="match status" value="1"/>
</dbReference>
<dbReference type="Pfam" id="PF16198">
    <property type="entry name" value="TruB_C_2"/>
    <property type="match status" value="1"/>
</dbReference>
<dbReference type="Pfam" id="PF01509">
    <property type="entry name" value="TruB_N"/>
    <property type="match status" value="1"/>
</dbReference>
<dbReference type="SUPFAM" id="SSF55120">
    <property type="entry name" value="Pseudouridine synthase"/>
    <property type="match status" value="1"/>
</dbReference>
<dbReference type="SUPFAM" id="SSF88697">
    <property type="entry name" value="PUA domain-like"/>
    <property type="match status" value="1"/>
</dbReference>
<evidence type="ECO:0000255" key="1">
    <source>
        <dbReference type="HAMAP-Rule" id="MF_01080"/>
    </source>
</evidence>
<name>TRUB_ECTM1</name>
<organism>
    <name type="scientific">Ectopseudomonas mendocina (strain ymp)</name>
    <name type="common">Pseudomonas mendocina</name>
    <dbReference type="NCBI Taxonomy" id="399739"/>
    <lineage>
        <taxon>Bacteria</taxon>
        <taxon>Pseudomonadati</taxon>
        <taxon>Pseudomonadota</taxon>
        <taxon>Gammaproteobacteria</taxon>
        <taxon>Pseudomonadales</taxon>
        <taxon>Pseudomonadaceae</taxon>
        <taxon>Ectopseudomonas</taxon>
    </lineage>
</organism>
<keyword id="KW-0413">Isomerase</keyword>
<keyword id="KW-0819">tRNA processing</keyword>
<accession>A4XYD8</accession>
<protein>
    <recommendedName>
        <fullName evidence="1">tRNA pseudouridine synthase B</fullName>
        <ecNumber evidence="1">5.4.99.25</ecNumber>
    </recommendedName>
    <alternativeName>
        <fullName evidence="1">tRNA pseudouridine(55) synthase</fullName>
        <shortName evidence="1">Psi55 synthase</shortName>
    </alternativeName>
    <alternativeName>
        <fullName evidence="1">tRNA pseudouridylate synthase</fullName>
    </alternativeName>
    <alternativeName>
        <fullName evidence="1">tRNA-uridine isomerase</fullName>
    </alternativeName>
</protein>
<feature type="chain" id="PRO_1000084647" description="tRNA pseudouridine synthase B">
    <location>
        <begin position="1"/>
        <end position="306"/>
    </location>
</feature>
<feature type="active site" description="Nucleophile" evidence="1">
    <location>
        <position position="48"/>
    </location>
</feature>
<reference key="1">
    <citation type="submission" date="2007-04" db="EMBL/GenBank/DDBJ databases">
        <title>Complete sequence of Pseudomonas mendocina ymp.</title>
        <authorList>
            <consortium name="US DOE Joint Genome Institute"/>
            <person name="Copeland A."/>
            <person name="Lucas S."/>
            <person name="Lapidus A."/>
            <person name="Barry K."/>
            <person name="Glavina del Rio T."/>
            <person name="Dalin E."/>
            <person name="Tice H."/>
            <person name="Pitluck S."/>
            <person name="Kiss H."/>
            <person name="Brettin T."/>
            <person name="Detter J.C."/>
            <person name="Bruce D."/>
            <person name="Han C."/>
            <person name="Schmutz J."/>
            <person name="Larimer F."/>
            <person name="Land M."/>
            <person name="Hauser L."/>
            <person name="Kyrpides N."/>
            <person name="Mikhailova N."/>
            <person name="Hersman L."/>
            <person name="Dubois J."/>
            <person name="Maurice P."/>
            <person name="Richardson P."/>
        </authorList>
    </citation>
    <scope>NUCLEOTIDE SEQUENCE [LARGE SCALE GENOMIC DNA]</scope>
    <source>
        <strain>ymp</strain>
    </source>
</reference>
<proteinExistence type="inferred from homology"/>
<comment type="function">
    <text evidence="1">Responsible for synthesis of pseudouridine from uracil-55 in the psi GC loop of transfer RNAs.</text>
</comment>
<comment type="catalytic activity">
    <reaction evidence="1">
        <text>uridine(55) in tRNA = pseudouridine(55) in tRNA</text>
        <dbReference type="Rhea" id="RHEA:42532"/>
        <dbReference type="Rhea" id="RHEA-COMP:10101"/>
        <dbReference type="Rhea" id="RHEA-COMP:10102"/>
        <dbReference type="ChEBI" id="CHEBI:65314"/>
        <dbReference type="ChEBI" id="CHEBI:65315"/>
        <dbReference type="EC" id="5.4.99.25"/>
    </reaction>
</comment>
<comment type="similarity">
    <text evidence="1">Belongs to the pseudouridine synthase TruB family. Type 1 subfamily.</text>
</comment>